<feature type="chain" id="PRO_0000190600" description="4-hydroxy-3-methylbut-2-en-1-yl diphosphate synthase (flavodoxin)">
    <location>
        <begin position="1"/>
        <end position="362"/>
    </location>
</feature>
<feature type="binding site" evidence="1">
    <location>
        <position position="266"/>
    </location>
    <ligand>
        <name>[4Fe-4S] cluster</name>
        <dbReference type="ChEBI" id="CHEBI:49883"/>
    </ligand>
</feature>
<feature type="binding site" evidence="1">
    <location>
        <position position="269"/>
    </location>
    <ligand>
        <name>[4Fe-4S] cluster</name>
        <dbReference type="ChEBI" id="CHEBI:49883"/>
    </ligand>
</feature>
<feature type="binding site" evidence="1">
    <location>
        <position position="301"/>
    </location>
    <ligand>
        <name>[4Fe-4S] cluster</name>
        <dbReference type="ChEBI" id="CHEBI:49883"/>
    </ligand>
</feature>
<feature type="binding site" evidence="1">
    <location>
        <position position="308"/>
    </location>
    <ligand>
        <name>[4Fe-4S] cluster</name>
        <dbReference type="ChEBI" id="CHEBI:49883"/>
    </ligand>
</feature>
<name>ISPG_MALP2</name>
<accession>Q8EUI6</accession>
<organism>
    <name type="scientific">Malacoplasma penetrans (strain HF-2)</name>
    <name type="common">Mycoplasma penetrans</name>
    <dbReference type="NCBI Taxonomy" id="272633"/>
    <lineage>
        <taxon>Bacteria</taxon>
        <taxon>Bacillati</taxon>
        <taxon>Mycoplasmatota</taxon>
        <taxon>Mycoplasmoidales</taxon>
        <taxon>Mycoplasmoidaceae</taxon>
        <taxon>Malacoplasma</taxon>
    </lineage>
</organism>
<keyword id="KW-0004">4Fe-4S</keyword>
<keyword id="KW-0408">Iron</keyword>
<keyword id="KW-0411">Iron-sulfur</keyword>
<keyword id="KW-0414">Isoprene biosynthesis</keyword>
<keyword id="KW-0479">Metal-binding</keyword>
<keyword id="KW-0560">Oxidoreductase</keyword>
<keyword id="KW-1185">Reference proteome</keyword>
<sequence length="362" mass="39238">MYKTIREKTKAVYVGNVQIGGNNKVVIQSMTTTKTHDVEKTVAQVKELVREGCELVRIAVLDDEDAAAFGEVVKNSPCPIIADIHFNPLYAIKAIESGAAKVRLNPGNIKDEEQLRKIIDLANKKNIPIRVGVNSGSLPMDLMKSHGVTADAMMIAVKRYINLFESNGFNNIVVSLKATNVLLAIEAYKKAAMEFNYPLHIGITEAGSLFNGTIKSAAGLGVLLHEGIGNTIRISLTGDPLSEVKVCKKLLNSLGLYDNLVDIISCPTCGRLNFDLNPVVKEIEKFTRKMNFPLKVAILGCAVNGPGEAKEADIGIAGGNGTGIIFANGKAIKSVPEDQLVDELKKLISIKYKEYLDSKKDK</sequence>
<comment type="function">
    <text evidence="1">Converts 2C-methyl-D-erythritol 2,4-cyclodiphosphate (ME-2,4cPP) into 1-hydroxy-2-methyl-2-(E)-butenyl 4-diphosphate.</text>
</comment>
<comment type="catalytic activity">
    <reaction evidence="1">
        <text>(2E)-4-hydroxy-3-methylbut-2-enyl diphosphate + oxidized [flavodoxin] + H2O + 2 H(+) = 2-C-methyl-D-erythritol 2,4-cyclic diphosphate + reduced [flavodoxin]</text>
        <dbReference type="Rhea" id="RHEA:43604"/>
        <dbReference type="Rhea" id="RHEA-COMP:10622"/>
        <dbReference type="Rhea" id="RHEA-COMP:10623"/>
        <dbReference type="ChEBI" id="CHEBI:15377"/>
        <dbReference type="ChEBI" id="CHEBI:15378"/>
        <dbReference type="ChEBI" id="CHEBI:57618"/>
        <dbReference type="ChEBI" id="CHEBI:58210"/>
        <dbReference type="ChEBI" id="CHEBI:58483"/>
        <dbReference type="ChEBI" id="CHEBI:128753"/>
        <dbReference type="EC" id="1.17.7.3"/>
    </reaction>
</comment>
<comment type="cofactor">
    <cofactor evidence="1">
        <name>[4Fe-4S] cluster</name>
        <dbReference type="ChEBI" id="CHEBI:49883"/>
    </cofactor>
    <text evidence="1">Binds 1 [4Fe-4S] cluster.</text>
</comment>
<comment type="pathway">
    <text evidence="1">Isoprenoid biosynthesis; isopentenyl diphosphate biosynthesis via DXP pathway; isopentenyl diphosphate from 1-deoxy-D-xylulose 5-phosphate: step 5/6.</text>
</comment>
<comment type="similarity">
    <text evidence="1">Belongs to the IspG family.</text>
</comment>
<reference key="1">
    <citation type="journal article" date="2002" name="Nucleic Acids Res.">
        <title>The complete genomic sequence of Mycoplasma penetrans, an intracellular bacterial pathogen in humans.</title>
        <authorList>
            <person name="Sasaki Y."/>
            <person name="Ishikawa J."/>
            <person name="Yamashita A."/>
            <person name="Oshima K."/>
            <person name="Kenri T."/>
            <person name="Furuya K."/>
            <person name="Yoshino C."/>
            <person name="Horino A."/>
            <person name="Shiba T."/>
            <person name="Sasaki T."/>
            <person name="Hattori M."/>
        </authorList>
    </citation>
    <scope>NUCLEOTIDE SEQUENCE [LARGE SCALE GENOMIC DNA]</scope>
    <source>
        <strain>HF-2</strain>
    </source>
</reference>
<protein>
    <recommendedName>
        <fullName evidence="1">4-hydroxy-3-methylbut-2-en-1-yl diphosphate synthase (flavodoxin)</fullName>
        <ecNumber evidence="1">1.17.7.3</ecNumber>
    </recommendedName>
    <alternativeName>
        <fullName evidence="1">1-hydroxy-2-methyl-2-(E)-butenyl 4-diphosphate synthase</fullName>
    </alternativeName>
</protein>
<evidence type="ECO:0000255" key="1">
    <source>
        <dbReference type="HAMAP-Rule" id="MF_00159"/>
    </source>
</evidence>
<proteinExistence type="inferred from homology"/>
<dbReference type="EC" id="1.17.7.3" evidence="1"/>
<dbReference type="EMBL" id="BA000026">
    <property type="protein sequence ID" value="BAC44727.1"/>
    <property type="molecule type" value="Genomic_DNA"/>
</dbReference>
<dbReference type="RefSeq" id="WP_011077756.1">
    <property type="nucleotide sequence ID" value="NC_004432.1"/>
</dbReference>
<dbReference type="SMR" id="Q8EUI6"/>
<dbReference type="FunCoup" id="Q8EUI6">
    <property type="interactions" value="95"/>
</dbReference>
<dbReference type="STRING" id="272633.gene:10732061"/>
<dbReference type="KEGG" id="mpe:MYPE9400"/>
<dbReference type="eggNOG" id="COG0821">
    <property type="taxonomic scope" value="Bacteria"/>
</dbReference>
<dbReference type="HOGENOM" id="CLU_042258_0_0_14"/>
<dbReference type="InParanoid" id="Q8EUI6"/>
<dbReference type="UniPathway" id="UPA00056">
    <property type="reaction ID" value="UER00096"/>
</dbReference>
<dbReference type="Proteomes" id="UP000002522">
    <property type="component" value="Chromosome"/>
</dbReference>
<dbReference type="GO" id="GO:0051539">
    <property type="term" value="F:4 iron, 4 sulfur cluster binding"/>
    <property type="evidence" value="ECO:0007669"/>
    <property type="project" value="UniProtKB-UniRule"/>
</dbReference>
<dbReference type="GO" id="GO:0046429">
    <property type="term" value="F:4-hydroxy-3-methylbut-2-en-1-yl diphosphate synthase activity (ferredoxin)"/>
    <property type="evidence" value="ECO:0007669"/>
    <property type="project" value="UniProtKB-UniRule"/>
</dbReference>
<dbReference type="GO" id="GO:0141197">
    <property type="term" value="F:4-hydroxy-3-methylbut-2-enyl-diphosphate synthase activity (flavodoxin)"/>
    <property type="evidence" value="ECO:0007669"/>
    <property type="project" value="UniProtKB-EC"/>
</dbReference>
<dbReference type="GO" id="GO:0005506">
    <property type="term" value="F:iron ion binding"/>
    <property type="evidence" value="ECO:0007669"/>
    <property type="project" value="InterPro"/>
</dbReference>
<dbReference type="GO" id="GO:0019288">
    <property type="term" value="P:isopentenyl diphosphate biosynthetic process, methylerythritol 4-phosphate pathway"/>
    <property type="evidence" value="ECO:0007669"/>
    <property type="project" value="UniProtKB-UniRule"/>
</dbReference>
<dbReference type="GO" id="GO:0016114">
    <property type="term" value="P:terpenoid biosynthetic process"/>
    <property type="evidence" value="ECO:0007669"/>
    <property type="project" value="InterPro"/>
</dbReference>
<dbReference type="FunFam" id="3.20.20.20:FF:000001">
    <property type="entry name" value="4-hydroxy-3-methylbut-2-en-1-yl diphosphate synthase (flavodoxin)"/>
    <property type="match status" value="1"/>
</dbReference>
<dbReference type="Gene3D" id="3.20.20.20">
    <property type="entry name" value="Dihydropteroate synthase-like"/>
    <property type="match status" value="1"/>
</dbReference>
<dbReference type="Gene3D" id="3.30.413.10">
    <property type="entry name" value="Sulfite Reductase Hemoprotein, domain 1"/>
    <property type="match status" value="1"/>
</dbReference>
<dbReference type="HAMAP" id="MF_00159">
    <property type="entry name" value="IspG"/>
    <property type="match status" value="1"/>
</dbReference>
<dbReference type="InterPro" id="IPR011005">
    <property type="entry name" value="Dihydropteroate_synth-like_sf"/>
</dbReference>
<dbReference type="InterPro" id="IPR016425">
    <property type="entry name" value="IspG_bac"/>
</dbReference>
<dbReference type="InterPro" id="IPR004588">
    <property type="entry name" value="IspG_bac-typ"/>
</dbReference>
<dbReference type="InterPro" id="IPR045854">
    <property type="entry name" value="NO2/SO3_Rdtase_4Fe4S_sf"/>
</dbReference>
<dbReference type="NCBIfam" id="TIGR00612">
    <property type="entry name" value="ispG_gcpE"/>
    <property type="match status" value="1"/>
</dbReference>
<dbReference type="NCBIfam" id="NF001540">
    <property type="entry name" value="PRK00366.1"/>
    <property type="match status" value="1"/>
</dbReference>
<dbReference type="PANTHER" id="PTHR30454">
    <property type="entry name" value="4-HYDROXY-3-METHYLBUT-2-EN-1-YL DIPHOSPHATE SYNTHASE"/>
    <property type="match status" value="1"/>
</dbReference>
<dbReference type="PANTHER" id="PTHR30454:SF0">
    <property type="entry name" value="4-HYDROXY-3-METHYLBUT-2-EN-1-YL DIPHOSPHATE SYNTHASE (FERREDOXIN), CHLOROPLASTIC"/>
    <property type="match status" value="1"/>
</dbReference>
<dbReference type="Pfam" id="PF04551">
    <property type="entry name" value="GcpE"/>
    <property type="match status" value="1"/>
</dbReference>
<dbReference type="PIRSF" id="PIRSF004640">
    <property type="entry name" value="IspG"/>
    <property type="match status" value="1"/>
</dbReference>
<dbReference type="SUPFAM" id="SSF51717">
    <property type="entry name" value="Dihydropteroate synthetase-like"/>
    <property type="match status" value="1"/>
</dbReference>
<dbReference type="SUPFAM" id="SSF56014">
    <property type="entry name" value="Nitrite and sulphite reductase 4Fe-4S domain-like"/>
    <property type="match status" value="1"/>
</dbReference>
<gene>
    <name evidence="1" type="primary">ispG</name>
    <name type="ordered locus">MYPE9400</name>
</gene>